<dbReference type="EC" id="2.1.1.177" evidence="1"/>
<dbReference type="EMBL" id="AE017340">
    <property type="protein sequence ID" value="AAV81792.1"/>
    <property type="molecule type" value="Genomic_DNA"/>
</dbReference>
<dbReference type="RefSeq" id="WP_011234203.1">
    <property type="nucleotide sequence ID" value="NC_006512.1"/>
</dbReference>
<dbReference type="SMR" id="Q5QYD9"/>
<dbReference type="STRING" id="283942.IL0952"/>
<dbReference type="GeneID" id="41336112"/>
<dbReference type="KEGG" id="ilo:IL0952"/>
<dbReference type="eggNOG" id="COG1576">
    <property type="taxonomic scope" value="Bacteria"/>
</dbReference>
<dbReference type="HOGENOM" id="CLU_100552_1_0_6"/>
<dbReference type="OrthoDB" id="9806643at2"/>
<dbReference type="Proteomes" id="UP000001171">
    <property type="component" value="Chromosome"/>
</dbReference>
<dbReference type="GO" id="GO:0005737">
    <property type="term" value="C:cytoplasm"/>
    <property type="evidence" value="ECO:0007669"/>
    <property type="project" value="UniProtKB-SubCell"/>
</dbReference>
<dbReference type="GO" id="GO:0070038">
    <property type="term" value="F:rRNA (pseudouridine-N3-)-methyltransferase activity"/>
    <property type="evidence" value="ECO:0007669"/>
    <property type="project" value="UniProtKB-UniRule"/>
</dbReference>
<dbReference type="CDD" id="cd18081">
    <property type="entry name" value="RlmH-like"/>
    <property type="match status" value="1"/>
</dbReference>
<dbReference type="Gene3D" id="3.40.1280.10">
    <property type="match status" value="1"/>
</dbReference>
<dbReference type="HAMAP" id="MF_00658">
    <property type="entry name" value="23SrRNA_methyltr_H"/>
    <property type="match status" value="1"/>
</dbReference>
<dbReference type="InterPro" id="IPR029028">
    <property type="entry name" value="Alpha/beta_knot_MTases"/>
</dbReference>
<dbReference type="InterPro" id="IPR003742">
    <property type="entry name" value="RlmH-like"/>
</dbReference>
<dbReference type="InterPro" id="IPR029026">
    <property type="entry name" value="tRNA_m1G_MTases_N"/>
</dbReference>
<dbReference type="NCBIfam" id="NF000984">
    <property type="entry name" value="PRK00103.1-1"/>
    <property type="match status" value="1"/>
</dbReference>
<dbReference type="NCBIfam" id="NF000986">
    <property type="entry name" value="PRK00103.1-4"/>
    <property type="match status" value="1"/>
</dbReference>
<dbReference type="NCBIfam" id="TIGR00246">
    <property type="entry name" value="tRNA_RlmH_YbeA"/>
    <property type="match status" value="1"/>
</dbReference>
<dbReference type="PANTHER" id="PTHR33603">
    <property type="entry name" value="METHYLTRANSFERASE"/>
    <property type="match status" value="1"/>
</dbReference>
<dbReference type="PANTHER" id="PTHR33603:SF1">
    <property type="entry name" value="RIBOSOMAL RNA LARGE SUBUNIT METHYLTRANSFERASE H"/>
    <property type="match status" value="1"/>
</dbReference>
<dbReference type="Pfam" id="PF02590">
    <property type="entry name" value="SPOUT_MTase"/>
    <property type="match status" value="1"/>
</dbReference>
<dbReference type="PIRSF" id="PIRSF004505">
    <property type="entry name" value="MT_bac"/>
    <property type="match status" value="1"/>
</dbReference>
<dbReference type="SUPFAM" id="SSF75217">
    <property type="entry name" value="alpha/beta knot"/>
    <property type="match status" value="1"/>
</dbReference>
<gene>
    <name evidence="1" type="primary">rlmH</name>
    <name type="ordered locus">IL0952</name>
</gene>
<organism>
    <name type="scientific">Idiomarina loihiensis (strain ATCC BAA-735 / DSM 15497 / L2-TR)</name>
    <dbReference type="NCBI Taxonomy" id="283942"/>
    <lineage>
        <taxon>Bacteria</taxon>
        <taxon>Pseudomonadati</taxon>
        <taxon>Pseudomonadota</taxon>
        <taxon>Gammaproteobacteria</taxon>
        <taxon>Alteromonadales</taxon>
        <taxon>Idiomarinaceae</taxon>
        <taxon>Idiomarina</taxon>
    </lineage>
</organism>
<feature type="chain" id="PRO_0000198130" description="Ribosomal RNA large subunit methyltransferase H">
    <location>
        <begin position="1"/>
        <end position="156"/>
    </location>
</feature>
<feature type="binding site" evidence="1">
    <location>
        <position position="73"/>
    </location>
    <ligand>
        <name>S-adenosyl-L-methionine</name>
        <dbReference type="ChEBI" id="CHEBI:59789"/>
    </ligand>
</feature>
<feature type="binding site" evidence="1">
    <location>
        <position position="104"/>
    </location>
    <ligand>
        <name>S-adenosyl-L-methionine</name>
        <dbReference type="ChEBI" id="CHEBI:59789"/>
    </ligand>
</feature>
<feature type="binding site" evidence="1">
    <location>
        <begin position="123"/>
        <end position="128"/>
    </location>
    <ligand>
        <name>S-adenosyl-L-methionine</name>
        <dbReference type="ChEBI" id="CHEBI:59789"/>
    </ligand>
</feature>
<evidence type="ECO:0000255" key="1">
    <source>
        <dbReference type="HAMAP-Rule" id="MF_00658"/>
    </source>
</evidence>
<accession>Q5QYD9</accession>
<comment type="function">
    <text evidence="1">Specifically methylates the pseudouridine at position 1915 (m3Psi1915) in 23S rRNA.</text>
</comment>
<comment type="catalytic activity">
    <reaction evidence="1">
        <text>pseudouridine(1915) in 23S rRNA + S-adenosyl-L-methionine = N(3)-methylpseudouridine(1915) in 23S rRNA + S-adenosyl-L-homocysteine + H(+)</text>
        <dbReference type="Rhea" id="RHEA:42752"/>
        <dbReference type="Rhea" id="RHEA-COMP:10221"/>
        <dbReference type="Rhea" id="RHEA-COMP:10222"/>
        <dbReference type="ChEBI" id="CHEBI:15378"/>
        <dbReference type="ChEBI" id="CHEBI:57856"/>
        <dbReference type="ChEBI" id="CHEBI:59789"/>
        <dbReference type="ChEBI" id="CHEBI:65314"/>
        <dbReference type="ChEBI" id="CHEBI:74486"/>
        <dbReference type="EC" id="2.1.1.177"/>
    </reaction>
</comment>
<comment type="subunit">
    <text evidence="1">Homodimer.</text>
</comment>
<comment type="subcellular location">
    <subcellularLocation>
        <location evidence="1">Cytoplasm</location>
    </subcellularLocation>
</comment>
<comment type="similarity">
    <text evidence="1">Belongs to the RNA methyltransferase RlmH family.</text>
</comment>
<name>RLMH_IDILO</name>
<keyword id="KW-0963">Cytoplasm</keyword>
<keyword id="KW-0489">Methyltransferase</keyword>
<keyword id="KW-1185">Reference proteome</keyword>
<keyword id="KW-0698">rRNA processing</keyword>
<keyword id="KW-0949">S-adenosyl-L-methionine</keyword>
<keyword id="KW-0808">Transferase</keyword>
<sequence>MQIQLLAVGTKMPTWVTEGFNEYKKRFPADCKLVLHEIAAQKRTRKADLNRVMQQEGKSLLQAIPKGNRIVTLEVKGQAWDTPKLAQQLEKWQMDGRDVTLLIGGPEGLSDECLAAAEQRWSLSKLTLPHPVVRLIVAESLYRAWSLNNNHPYHRE</sequence>
<protein>
    <recommendedName>
        <fullName evidence="1">Ribosomal RNA large subunit methyltransferase H</fullName>
        <ecNumber evidence="1">2.1.1.177</ecNumber>
    </recommendedName>
    <alternativeName>
        <fullName evidence="1">23S rRNA (pseudouridine1915-N3)-methyltransferase</fullName>
    </alternativeName>
    <alternativeName>
        <fullName evidence="1">23S rRNA m3Psi1915 methyltransferase</fullName>
    </alternativeName>
    <alternativeName>
        <fullName evidence="1">rRNA (pseudouridine-N3-)-methyltransferase RlmH</fullName>
    </alternativeName>
</protein>
<proteinExistence type="inferred from homology"/>
<reference key="1">
    <citation type="journal article" date="2004" name="Proc. Natl. Acad. Sci. U.S.A.">
        <title>Genome sequence of the deep-sea gamma-proteobacterium Idiomarina loihiensis reveals amino acid fermentation as a source of carbon and energy.</title>
        <authorList>
            <person name="Hou S."/>
            <person name="Saw J.H."/>
            <person name="Lee K.S."/>
            <person name="Freitas T.A."/>
            <person name="Belisle C."/>
            <person name="Kawarabayasi Y."/>
            <person name="Donachie S.P."/>
            <person name="Pikina A."/>
            <person name="Galperin M.Y."/>
            <person name="Koonin E.V."/>
            <person name="Makarova K.S."/>
            <person name="Omelchenko M.V."/>
            <person name="Sorokin A."/>
            <person name="Wolf Y.I."/>
            <person name="Li Q.X."/>
            <person name="Keum Y.S."/>
            <person name="Campbell S."/>
            <person name="Denery J."/>
            <person name="Aizawa S."/>
            <person name="Shibata S."/>
            <person name="Malahoff A."/>
            <person name="Alam M."/>
        </authorList>
    </citation>
    <scope>NUCLEOTIDE SEQUENCE [LARGE SCALE GENOMIC DNA]</scope>
    <source>
        <strain>ATCC BAA-735 / DSM 15497 / L2-TR</strain>
    </source>
</reference>